<organism>
    <name type="scientific">Daboia siamensis</name>
    <name type="common">Eastern Russel's viper</name>
    <name type="synonym">Daboia russelii siamensis</name>
    <dbReference type="NCBI Taxonomy" id="343250"/>
    <lineage>
        <taxon>Eukaryota</taxon>
        <taxon>Metazoa</taxon>
        <taxon>Chordata</taxon>
        <taxon>Craniata</taxon>
        <taxon>Vertebrata</taxon>
        <taxon>Euteleostomi</taxon>
        <taxon>Lepidosauria</taxon>
        <taxon>Squamata</taxon>
        <taxon>Bifurcata</taxon>
        <taxon>Unidentata</taxon>
        <taxon>Episquamata</taxon>
        <taxon>Toxicofera</taxon>
        <taxon>Serpentes</taxon>
        <taxon>Colubroidea</taxon>
        <taxon>Viperidae</taxon>
        <taxon>Viperinae</taxon>
        <taxon>Daboia</taxon>
    </lineage>
</organism>
<gene>
    <name type="primary">LC1</name>
</gene>
<evidence type="ECO:0000255" key="1">
    <source>
        <dbReference type="PROSITE-ProRule" id="PRU00040"/>
    </source>
</evidence>
<evidence type="ECO:0000269" key="2">
    <source>
    </source>
</evidence>
<evidence type="ECO:0000269" key="3">
    <source>
    </source>
</evidence>
<evidence type="ECO:0000269" key="4">
    <source>
    </source>
</evidence>
<evidence type="ECO:0000269" key="5">
    <source>
    </source>
</evidence>
<evidence type="ECO:0000305" key="6"/>
<evidence type="ECO:0000305" key="7">
    <source>
    </source>
</evidence>
<evidence type="ECO:0007829" key="8">
    <source>
        <dbReference type="PDB" id="2E3X"/>
    </source>
</evidence>
<feature type="signal peptide" evidence="2 5">
    <location>
        <begin position="1"/>
        <end position="23"/>
    </location>
</feature>
<feature type="chain" id="PRO_0000017532" description="Snaclec coagulation factor X-activating enzyme light chain 1">
    <location>
        <begin position="24"/>
        <end position="146"/>
    </location>
</feature>
<feature type="domain" description="C-type lectin" evidence="1">
    <location>
        <begin position="34"/>
        <end position="145"/>
    </location>
</feature>
<feature type="glycosylation site" description="N-linked (GlcNAc...) (complex) asparagine" evidence="3 5">
    <location>
        <position position="47"/>
    </location>
</feature>
<feature type="disulfide bond" evidence="1 3">
    <location>
        <begin position="27"/>
        <end position="38"/>
    </location>
</feature>
<feature type="disulfide bond" evidence="1 3">
    <location>
        <begin position="55"/>
        <end position="144"/>
    </location>
</feature>
<feature type="disulfide bond" description="Interchain (with C-104 in coagulation factor X-activating enzyme light chain LC2)" evidence="1 3">
    <location>
        <position position="100"/>
    </location>
</feature>
<feature type="disulfide bond" evidence="1 3">
    <location>
        <begin position="121"/>
        <end position="136"/>
    </location>
</feature>
<feature type="sequence conflict" description="In Ref. 1; AAY63871." evidence="6" ref="1">
    <original>C</original>
    <variation>W</variation>
    <location>
        <position position="11"/>
    </location>
</feature>
<feature type="sequence conflict" description="In Ref. 1; AAY63871." evidence="6" ref="1">
    <original>E</original>
    <variation>K</variation>
    <location>
        <position position="74"/>
    </location>
</feature>
<feature type="sequence conflict" description="In Ref. 1; AAY63871." evidence="6" ref="1">
    <original>E</original>
    <variation>V</variation>
    <location>
        <position position="130"/>
    </location>
</feature>
<feature type="strand" evidence="8">
    <location>
        <begin position="32"/>
        <end position="34"/>
    </location>
</feature>
<feature type="strand" evidence="8">
    <location>
        <begin position="37"/>
        <end position="41"/>
    </location>
</feature>
<feature type="helix" evidence="8">
    <location>
        <begin position="48"/>
        <end position="58"/>
    </location>
</feature>
<feature type="helix" evidence="8">
    <location>
        <begin position="70"/>
        <end position="83"/>
    </location>
</feature>
<feature type="strand" evidence="8">
    <location>
        <begin position="85"/>
        <end position="95"/>
    </location>
</feature>
<feature type="strand" evidence="8">
    <location>
        <begin position="98"/>
        <end position="100"/>
    </location>
</feature>
<feature type="strand" evidence="8">
    <location>
        <begin position="102"/>
        <end position="104"/>
    </location>
</feature>
<feature type="strand" evidence="8">
    <location>
        <begin position="120"/>
        <end position="125"/>
    </location>
</feature>
<feature type="turn" evidence="8">
    <location>
        <begin position="126"/>
        <end position="128"/>
    </location>
</feature>
<feature type="strand" evidence="8">
    <location>
        <begin position="131"/>
        <end position="135"/>
    </location>
</feature>
<feature type="strand" evidence="8">
    <location>
        <begin position="143"/>
        <end position="145"/>
    </location>
</feature>
<protein>
    <recommendedName>
        <fullName>Snaclec coagulation factor X-activating enzyme light chain 1</fullName>
    </recommendedName>
    <alternativeName>
        <fullName>C-type lectin-like protein subunit 2</fullName>
    </alternativeName>
    <alternativeName>
        <fullName>Coagulation factor X-activating enzyme gamma-chain</fullName>
    </alternativeName>
    <alternativeName>
        <fullName>RVV-X light chain 1</fullName>
    </alternativeName>
</protein>
<name>SLLC1_DABSI</name>
<accession>Q4PRD1</accession>
<accession>A9UKE3</accession>
<accession>Q7LZ72</accession>
<keyword id="KW-0002">3D-structure</keyword>
<keyword id="KW-1204">Blood coagulation cascade activating toxin</keyword>
<keyword id="KW-0106">Calcium</keyword>
<keyword id="KW-0903">Direct protein sequencing</keyword>
<keyword id="KW-1015">Disulfide bond</keyword>
<keyword id="KW-0325">Glycoprotein</keyword>
<keyword id="KW-1199">Hemostasis impairing toxin</keyword>
<keyword id="KW-0479">Metal-binding</keyword>
<keyword id="KW-0964">Secreted</keyword>
<keyword id="KW-0732">Signal</keyword>
<keyword id="KW-0800">Toxin</keyword>
<proteinExistence type="evidence at protein level"/>
<comment type="function">
    <text evidence="4">Regulatory subunit of the blood coagulation factor X- and IX-activating enzyme. The enzyme activates coagulation factor X (F10) by cleaving the Arg-Ile bond and is also able to activate coagulation factor IX (F9) and protein S (PROS1) by specific cleavage of Arg-Ile and Arg-Val bonds. May serve as an exosite by which the enzyme recognizes and binds to the Gla domain of factor X (F10) and factor IX (F9) in a calcium-dependent manner.</text>
</comment>
<comment type="subunit">
    <text evidence="3 5">Heterotrimer; disulfide-linked. The heterotrimer consists of 1 heavy chain (a metalloproteinase) and 2 light chains: LC1 and LC2.</text>
</comment>
<comment type="subcellular location">
    <subcellularLocation>
        <location>Secreted</location>
    </subcellularLocation>
</comment>
<comment type="tissue specificity">
    <text>Expressed by the venom gland.</text>
</comment>
<comment type="PTM">
    <text evidence="2 3 5">N-glycosylated; probably required for conformation. Removal of easily accessible sugars does not change its functional capacity, but removal of the core sugars with N-glycanase causes a virtually complete loss of enzyme activity, apparently as a result of major conformational changes in the molecule. Not O-glycosylated.</text>
</comment>
<comment type="miscellaneous">
    <text evidence="7">Binding to prothrombin and protein C (PROC) is hardly detectable.</text>
</comment>
<comment type="similarity">
    <text evidence="6">Belongs to the snaclec family.</text>
</comment>
<dbReference type="EMBL" id="DQ060415">
    <property type="protein sequence ID" value="AAY63871.1"/>
    <property type="molecule type" value="mRNA"/>
</dbReference>
<dbReference type="EMBL" id="AY734998">
    <property type="protein sequence ID" value="AAW69870.1"/>
    <property type="molecule type" value="mRNA"/>
</dbReference>
<dbReference type="PIR" id="B42972">
    <property type="entry name" value="B42972"/>
</dbReference>
<dbReference type="PDB" id="2E3X">
    <property type="method" value="X-ray"/>
    <property type="resolution" value="2.91 A"/>
    <property type="chains" value="C=25-146"/>
</dbReference>
<dbReference type="PDBsum" id="2E3X"/>
<dbReference type="SMR" id="Q4PRD1"/>
<dbReference type="GlyCosmos" id="Q4PRD1">
    <property type="glycosylation" value="1 site, No reported glycans"/>
</dbReference>
<dbReference type="iPTMnet" id="Q4PRD1"/>
<dbReference type="BRENDA" id="3.4.24.58">
    <property type="organism ID" value="6667"/>
</dbReference>
<dbReference type="EvolutionaryTrace" id="Q4PRD1"/>
<dbReference type="GO" id="GO:0005576">
    <property type="term" value="C:extracellular region"/>
    <property type="evidence" value="ECO:0007669"/>
    <property type="project" value="UniProtKB-SubCell"/>
</dbReference>
<dbReference type="GO" id="GO:0046872">
    <property type="term" value="F:metal ion binding"/>
    <property type="evidence" value="ECO:0007669"/>
    <property type="project" value="UniProtKB-KW"/>
</dbReference>
<dbReference type="GO" id="GO:0090729">
    <property type="term" value="F:toxin activity"/>
    <property type="evidence" value="ECO:0007669"/>
    <property type="project" value="UniProtKB-KW"/>
</dbReference>
<dbReference type="FunFam" id="3.10.100.10:FF:000087">
    <property type="entry name" value="Snaclec rhodocetin subunit delta"/>
    <property type="match status" value="1"/>
</dbReference>
<dbReference type="Gene3D" id="3.10.100.10">
    <property type="entry name" value="Mannose-Binding Protein A, subunit A"/>
    <property type="match status" value="1"/>
</dbReference>
<dbReference type="InterPro" id="IPR001304">
    <property type="entry name" value="C-type_lectin-like"/>
</dbReference>
<dbReference type="InterPro" id="IPR016186">
    <property type="entry name" value="C-type_lectin-like/link_sf"/>
</dbReference>
<dbReference type="InterPro" id="IPR050111">
    <property type="entry name" value="C-type_lectin/snaclec_domain"/>
</dbReference>
<dbReference type="InterPro" id="IPR018378">
    <property type="entry name" value="C-type_lectin_CS"/>
</dbReference>
<dbReference type="InterPro" id="IPR016187">
    <property type="entry name" value="CTDL_fold"/>
</dbReference>
<dbReference type="PANTHER" id="PTHR22803">
    <property type="entry name" value="MANNOSE, PHOSPHOLIPASE, LECTIN RECEPTOR RELATED"/>
    <property type="match status" value="1"/>
</dbReference>
<dbReference type="Pfam" id="PF00059">
    <property type="entry name" value="Lectin_C"/>
    <property type="match status" value="1"/>
</dbReference>
<dbReference type="SMART" id="SM00034">
    <property type="entry name" value="CLECT"/>
    <property type="match status" value="1"/>
</dbReference>
<dbReference type="SUPFAM" id="SSF56436">
    <property type="entry name" value="C-type lectin-like"/>
    <property type="match status" value="1"/>
</dbReference>
<dbReference type="PROSITE" id="PS00615">
    <property type="entry name" value="C_TYPE_LECTIN_1"/>
    <property type="match status" value="1"/>
</dbReference>
<dbReference type="PROSITE" id="PS50041">
    <property type="entry name" value="C_TYPE_LECTIN_2"/>
    <property type="match status" value="1"/>
</dbReference>
<sequence length="146" mass="16871">MGRFISVSFGCLVVFLSLSGTEAVLDCPSGWLSYEQHCYKGFNDLKNWTDAEKFCTEQKKGSHLVSLHSREEEEFVVNLISENLEYPATWIGLGNMWKDCRMEWSDRGNVKYKALAEESYCLIMITHEKEWKSMTCNFIAPVVCKF</sequence>
<reference key="1">
    <citation type="submission" date="2005-05" db="EMBL/GenBank/DDBJ databases">
        <title>Molecular cloning and sequence analysis of cDNAs encoding seven C-type lectin-like protein subunits from Daboia russellii siamensis.</title>
        <authorList>
            <person name="Zhong S."/>
            <person name="Jin Y."/>
            <person name="Li D."/>
            <person name="Wang W."/>
            <person name="Xiong Y."/>
        </authorList>
    </citation>
    <scope>NUCLEOTIDE SEQUENCE [MRNA]</scope>
    <source>
        <tissue>Venom gland</tissue>
    </source>
</reference>
<reference key="2">
    <citation type="journal article" date="2008" name="FEBS J.">
        <title>New insights into the functions and N-glycan structures of factor X activator from Russell's viper venom.</title>
        <authorList>
            <person name="Chen H.S."/>
            <person name="Chen J.M."/>
            <person name="Lin C.W."/>
            <person name="Khoo K.H."/>
            <person name="Tsai I.H."/>
        </authorList>
    </citation>
    <scope>NUCLEOTIDE SEQUENCE [MRNA]</scope>
    <scope>FUNCTION</scope>
    <source>
        <tissue>Venom</tissue>
        <tissue>Venom gland</tissue>
    </source>
</reference>
<reference key="3">
    <citation type="journal article" date="1992" name="J. Biol. Chem.">
        <title>Coagulation factor X activating enzyme from Russell's viper venom (RVV-X). A novel metalloproteinase with disintegrin (platelet aggregation inhibitor)-like and C-type lectin-like domains.</title>
        <authorList>
            <person name="Takeya H."/>
            <person name="Nishida S."/>
            <person name="Miyata T."/>
            <person name="Kawada S."/>
            <person name="Saisaka Y."/>
            <person name="Morita T."/>
            <person name="Iwanaga S."/>
        </authorList>
    </citation>
    <scope>PROTEIN SEQUENCE OF 24-146</scope>
    <scope>CALCIUM-BINDING</scope>
    <scope>ENZYME ACTIVITY</scope>
    <scope>GLYCOSYLATION</scope>
    <source>
        <tissue>Venom</tissue>
    </source>
</reference>
<reference key="4">
    <citation type="journal article" date="1994" name="J. Biol. Chem.">
        <title>Factor X-activating glycoprotein of Russell's viper venom. Polypeptide composition and characterization of the carbohydrate moieties.</title>
        <authorList>
            <person name="Gowda D.C."/>
            <person name="Jackson C.M."/>
            <person name="Hensley P."/>
            <person name="Davidson E.A."/>
        </authorList>
    </citation>
    <scope>PROTEIN SEQUENCE OF 24-51</scope>
    <scope>ENZYME ACTIVITY</scope>
    <scope>SUBUNIT</scope>
    <scope>GLYCOSYLATION AT ASN-47</scope>
    <source>
        <tissue>Venom</tissue>
    </source>
</reference>
<reference key="5">
    <citation type="journal article" date="1996" name="Biochemistry">
        <title>Core sugar residues of the N-linked oligosaccharides of Russell's viper venom factor X-activator maintain functionally active polypeptide structure.</title>
        <authorList>
            <person name="Gowda D.C."/>
            <person name="Jackson C.M."/>
            <person name="Kurzban G.P."/>
            <person name="McPhie P."/>
            <person name="Davidson E.A."/>
        </authorList>
    </citation>
    <scope>ROLE OF GLYCOSYLATION</scope>
</reference>
<reference key="6">
    <citation type="journal article" date="2001" name="Haemostasis">
        <title>Snake venom activators of factor X: an overview.</title>
        <authorList>
            <person name="Tans G."/>
            <person name="Rosing J."/>
        </authorList>
    </citation>
    <scope>REVIEW</scope>
</reference>
<reference key="7">
    <citation type="journal article" date="2007" name="FEBS Lett.">
        <title>Crystal structure of RVV-X: an example of evolutionary gain of specificity by ADAM proteinases.</title>
        <authorList>
            <person name="Takeda S."/>
            <person name="Igarashi T."/>
            <person name="Mori H."/>
        </authorList>
    </citation>
    <scope>X-RAY CRYSTALLOGRAPHY (2.91 ANGSTROMS) OF 25-146 IN COMPLEX WITH LC2</scope>
    <scope>SUBUNIT</scope>
    <scope>GLYCOSYLATION AT ASN-47</scope>
    <scope>DISULFIDE BONDS</scope>
</reference>